<gene>
    <name evidence="1" type="primary">hslV</name>
    <name type="ordered locus">CJJ81176_0690</name>
</gene>
<organism>
    <name type="scientific">Campylobacter jejuni subsp. jejuni serotype O:23/36 (strain 81-176)</name>
    <dbReference type="NCBI Taxonomy" id="354242"/>
    <lineage>
        <taxon>Bacteria</taxon>
        <taxon>Pseudomonadati</taxon>
        <taxon>Campylobacterota</taxon>
        <taxon>Epsilonproteobacteria</taxon>
        <taxon>Campylobacterales</taxon>
        <taxon>Campylobacteraceae</taxon>
        <taxon>Campylobacter</taxon>
    </lineage>
</organism>
<feature type="chain" id="PRO_1000012600" description="ATP-dependent protease subunit HslV">
    <location>
        <begin position="1"/>
        <end position="180"/>
    </location>
</feature>
<feature type="active site" evidence="1">
    <location>
        <position position="5"/>
    </location>
</feature>
<feature type="binding site" evidence="1">
    <location>
        <position position="161"/>
    </location>
    <ligand>
        <name>Na(+)</name>
        <dbReference type="ChEBI" id="CHEBI:29101"/>
    </ligand>
</feature>
<feature type="binding site" evidence="1">
    <location>
        <position position="164"/>
    </location>
    <ligand>
        <name>Na(+)</name>
        <dbReference type="ChEBI" id="CHEBI:29101"/>
    </ligand>
</feature>
<feature type="binding site" evidence="1">
    <location>
        <position position="167"/>
    </location>
    <ligand>
        <name>Na(+)</name>
        <dbReference type="ChEBI" id="CHEBI:29101"/>
    </ligand>
</feature>
<sequence length="180" mass="19534">MFHATTILAYKGKNKSVIGGDGQVSFGNTVLKGNAVKIRKLNNGKVLAGFAGSTADAFNLFDMFENLLQSSKGDLLKAAIDFSKEWRKDKYLRKLEAMMLVLDRNHIFLLSGTGDVVEPEDGQIAAIGSGGNYALSAARALAKHASLDEEELVKSSLQIAGEICIYTNTNIKTYVIEDEK</sequence>
<comment type="function">
    <text evidence="1">Protease subunit of a proteasome-like degradation complex believed to be a general protein degrading machinery.</text>
</comment>
<comment type="catalytic activity">
    <reaction evidence="1">
        <text>ATP-dependent cleavage of peptide bonds with broad specificity.</text>
        <dbReference type="EC" id="3.4.25.2"/>
    </reaction>
</comment>
<comment type="activity regulation">
    <text evidence="1">Allosterically activated by HslU binding.</text>
</comment>
<comment type="subunit">
    <text evidence="1">A double ring-shaped homohexamer of HslV is capped on each side by a ring-shaped HslU homohexamer. The assembly of the HslU/HslV complex is dependent on binding of ATP.</text>
</comment>
<comment type="subcellular location">
    <subcellularLocation>
        <location evidence="1">Cytoplasm</location>
    </subcellularLocation>
</comment>
<comment type="similarity">
    <text evidence="1">Belongs to the peptidase T1B family. HslV subfamily.</text>
</comment>
<proteinExistence type="inferred from homology"/>
<dbReference type="EC" id="3.4.25.2" evidence="1"/>
<dbReference type="EMBL" id="CP000538">
    <property type="protein sequence ID" value="EAQ72399.1"/>
    <property type="molecule type" value="Genomic_DNA"/>
</dbReference>
<dbReference type="RefSeq" id="WP_002855129.1">
    <property type="nucleotide sequence ID" value="NC_008787.1"/>
</dbReference>
<dbReference type="SMR" id="A1VZ22"/>
<dbReference type="KEGG" id="cjj:CJJ81176_0690"/>
<dbReference type="eggNOG" id="COG5405">
    <property type="taxonomic scope" value="Bacteria"/>
</dbReference>
<dbReference type="HOGENOM" id="CLU_093872_1_1_7"/>
<dbReference type="Proteomes" id="UP000000646">
    <property type="component" value="Chromosome"/>
</dbReference>
<dbReference type="GO" id="GO:0009376">
    <property type="term" value="C:HslUV protease complex"/>
    <property type="evidence" value="ECO:0007669"/>
    <property type="project" value="UniProtKB-UniRule"/>
</dbReference>
<dbReference type="GO" id="GO:0005839">
    <property type="term" value="C:proteasome core complex"/>
    <property type="evidence" value="ECO:0007669"/>
    <property type="project" value="InterPro"/>
</dbReference>
<dbReference type="GO" id="GO:0046872">
    <property type="term" value="F:metal ion binding"/>
    <property type="evidence" value="ECO:0007669"/>
    <property type="project" value="UniProtKB-KW"/>
</dbReference>
<dbReference type="GO" id="GO:0004298">
    <property type="term" value="F:threonine-type endopeptidase activity"/>
    <property type="evidence" value="ECO:0007669"/>
    <property type="project" value="UniProtKB-KW"/>
</dbReference>
<dbReference type="GO" id="GO:0051603">
    <property type="term" value="P:proteolysis involved in protein catabolic process"/>
    <property type="evidence" value="ECO:0007669"/>
    <property type="project" value="InterPro"/>
</dbReference>
<dbReference type="CDD" id="cd01913">
    <property type="entry name" value="protease_HslV"/>
    <property type="match status" value="1"/>
</dbReference>
<dbReference type="Gene3D" id="3.60.20.10">
    <property type="entry name" value="Glutamine Phosphoribosylpyrophosphate, subunit 1, domain 1"/>
    <property type="match status" value="1"/>
</dbReference>
<dbReference type="HAMAP" id="MF_00248">
    <property type="entry name" value="HslV"/>
    <property type="match status" value="1"/>
</dbReference>
<dbReference type="InterPro" id="IPR022281">
    <property type="entry name" value="ATP-dep_Prtase_HsIV_su"/>
</dbReference>
<dbReference type="InterPro" id="IPR029055">
    <property type="entry name" value="Ntn_hydrolases_N"/>
</dbReference>
<dbReference type="InterPro" id="IPR001353">
    <property type="entry name" value="Proteasome_sua/b"/>
</dbReference>
<dbReference type="InterPro" id="IPR023333">
    <property type="entry name" value="Proteasome_suB-type"/>
</dbReference>
<dbReference type="NCBIfam" id="TIGR03692">
    <property type="entry name" value="ATP_dep_HslV"/>
    <property type="match status" value="1"/>
</dbReference>
<dbReference type="NCBIfam" id="NF003964">
    <property type="entry name" value="PRK05456.1"/>
    <property type="match status" value="1"/>
</dbReference>
<dbReference type="PANTHER" id="PTHR32194:SF0">
    <property type="entry name" value="ATP-DEPENDENT PROTEASE SUBUNIT HSLV"/>
    <property type="match status" value="1"/>
</dbReference>
<dbReference type="PANTHER" id="PTHR32194">
    <property type="entry name" value="METALLOPROTEASE TLDD"/>
    <property type="match status" value="1"/>
</dbReference>
<dbReference type="Pfam" id="PF00227">
    <property type="entry name" value="Proteasome"/>
    <property type="match status" value="1"/>
</dbReference>
<dbReference type="PIRSF" id="PIRSF039093">
    <property type="entry name" value="HslV"/>
    <property type="match status" value="1"/>
</dbReference>
<dbReference type="SUPFAM" id="SSF56235">
    <property type="entry name" value="N-terminal nucleophile aminohydrolases (Ntn hydrolases)"/>
    <property type="match status" value="1"/>
</dbReference>
<dbReference type="PROSITE" id="PS51476">
    <property type="entry name" value="PROTEASOME_BETA_2"/>
    <property type="match status" value="1"/>
</dbReference>
<keyword id="KW-0021">Allosteric enzyme</keyword>
<keyword id="KW-0963">Cytoplasm</keyword>
<keyword id="KW-0378">Hydrolase</keyword>
<keyword id="KW-0479">Metal-binding</keyword>
<keyword id="KW-0645">Protease</keyword>
<keyword id="KW-0915">Sodium</keyword>
<keyword id="KW-0888">Threonine protease</keyword>
<protein>
    <recommendedName>
        <fullName evidence="1">ATP-dependent protease subunit HslV</fullName>
        <ecNumber evidence="1">3.4.25.2</ecNumber>
    </recommendedName>
</protein>
<name>HSLV_CAMJJ</name>
<accession>A1VZ22</accession>
<evidence type="ECO:0000255" key="1">
    <source>
        <dbReference type="HAMAP-Rule" id="MF_00248"/>
    </source>
</evidence>
<reference key="1">
    <citation type="submission" date="2006-12" db="EMBL/GenBank/DDBJ databases">
        <authorList>
            <person name="Fouts D.E."/>
            <person name="Nelson K.E."/>
            <person name="Sebastian Y."/>
        </authorList>
    </citation>
    <scope>NUCLEOTIDE SEQUENCE [LARGE SCALE GENOMIC DNA]</scope>
    <source>
        <strain>81-176</strain>
    </source>
</reference>